<keyword id="KW-0067">ATP-binding</keyword>
<keyword id="KW-0963">Cytoplasm</keyword>
<keyword id="KW-0418">Kinase</keyword>
<keyword id="KW-0545">Nucleotide biosynthesis</keyword>
<keyword id="KW-0547">Nucleotide-binding</keyword>
<keyword id="KW-0808">Transferase</keyword>
<evidence type="ECO:0000255" key="1">
    <source>
        <dbReference type="HAMAP-Rule" id="MF_00235"/>
    </source>
</evidence>
<proteinExistence type="inferred from homology"/>
<feature type="chain" id="PRO_1000058880" description="Adenylate kinase">
    <location>
        <begin position="1"/>
        <end position="215"/>
    </location>
</feature>
<feature type="region of interest" description="NMP" evidence="1">
    <location>
        <begin position="30"/>
        <end position="59"/>
    </location>
</feature>
<feature type="region of interest" description="LID" evidence="1">
    <location>
        <begin position="122"/>
        <end position="159"/>
    </location>
</feature>
<feature type="binding site" evidence="1">
    <location>
        <begin position="10"/>
        <end position="15"/>
    </location>
    <ligand>
        <name>ATP</name>
        <dbReference type="ChEBI" id="CHEBI:30616"/>
    </ligand>
</feature>
<feature type="binding site" evidence="1">
    <location>
        <position position="31"/>
    </location>
    <ligand>
        <name>AMP</name>
        <dbReference type="ChEBI" id="CHEBI:456215"/>
    </ligand>
</feature>
<feature type="binding site" evidence="1">
    <location>
        <position position="36"/>
    </location>
    <ligand>
        <name>AMP</name>
        <dbReference type="ChEBI" id="CHEBI:456215"/>
    </ligand>
</feature>
<feature type="binding site" evidence="1">
    <location>
        <begin position="57"/>
        <end position="59"/>
    </location>
    <ligand>
        <name>AMP</name>
        <dbReference type="ChEBI" id="CHEBI:456215"/>
    </ligand>
</feature>
<feature type="binding site" evidence="1">
    <location>
        <begin position="85"/>
        <end position="88"/>
    </location>
    <ligand>
        <name>AMP</name>
        <dbReference type="ChEBI" id="CHEBI:456215"/>
    </ligand>
</feature>
<feature type="binding site" evidence="1">
    <location>
        <position position="92"/>
    </location>
    <ligand>
        <name>AMP</name>
        <dbReference type="ChEBI" id="CHEBI:456215"/>
    </ligand>
</feature>
<feature type="binding site" evidence="1">
    <location>
        <position position="123"/>
    </location>
    <ligand>
        <name>ATP</name>
        <dbReference type="ChEBI" id="CHEBI:30616"/>
    </ligand>
</feature>
<feature type="binding site" evidence="1">
    <location>
        <begin position="132"/>
        <end position="133"/>
    </location>
    <ligand>
        <name>ATP</name>
        <dbReference type="ChEBI" id="CHEBI:30616"/>
    </ligand>
</feature>
<feature type="binding site" evidence="1">
    <location>
        <position position="156"/>
    </location>
    <ligand>
        <name>AMP</name>
        <dbReference type="ChEBI" id="CHEBI:456215"/>
    </ligand>
</feature>
<feature type="binding site" evidence="1">
    <location>
        <position position="167"/>
    </location>
    <ligand>
        <name>AMP</name>
        <dbReference type="ChEBI" id="CHEBI:456215"/>
    </ligand>
</feature>
<feature type="binding site" evidence="1">
    <location>
        <position position="201"/>
    </location>
    <ligand>
        <name>ATP</name>
        <dbReference type="ChEBI" id="CHEBI:30616"/>
    </ligand>
</feature>
<dbReference type="EC" id="2.7.4.3" evidence="1"/>
<dbReference type="EMBL" id="CP000744">
    <property type="protein sequence ID" value="ABR80846.1"/>
    <property type="molecule type" value="Genomic_DNA"/>
</dbReference>
<dbReference type="RefSeq" id="WP_012074669.1">
    <property type="nucleotide sequence ID" value="NC_009656.1"/>
</dbReference>
<dbReference type="SMR" id="A6V1A1"/>
<dbReference type="KEGG" id="pap:PSPA7_1452"/>
<dbReference type="HOGENOM" id="CLU_032354_1_2_6"/>
<dbReference type="UniPathway" id="UPA00588">
    <property type="reaction ID" value="UER00649"/>
</dbReference>
<dbReference type="Proteomes" id="UP000001582">
    <property type="component" value="Chromosome"/>
</dbReference>
<dbReference type="GO" id="GO:0005737">
    <property type="term" value="C:cytoplasm"/>
    <property type="evidence" value="ECO:0007669"/>
    <property type="project" value="UniProtKB-SubCell"/>
</dbReference>
<dbReference type="GO" id="GO:0004017">
    <property type="term" value="F:adenylate kinase activity"/>
    <property type="evidence" value="ECO:0007669"/>
    <property type="project" value="UniProtKB-UniRule"/>
</dbReference>
<dbReference type="GO" id="GO:0005524">
    <property type="term" value="F:ATP binding"/>
    <property type="evidence" value="ECO:0007669"/>
    <property type="project" value="UniProtKB-UniRule"/>
</dbReference>
<dbReference type="GO" id="GO:0044209">
    <property type="term" value="P:AMP salvage"/>
    <property type="evidence" value="ECO:0007669"/>
    <property type="project" value="UniProtKB-UniRule"/>
</dbReference>
<dbReference type="CDD" id="cd01428">
    <property type="entry name" value="ADK"/>
    <property type="match status" value="1"/>
</dbReference>
<dbReference type="FunFam" id="3.40.50.300:FF:000106">
    <property type="entry name" value="Adenylate kinase mitochondrial"/>
    <property type="match status" value="1"/>
</dbReference>
<dbReference type="Gene3D" id="3.40.50.300">
    <property type="entry name" value="P-loop containing nucleotide triphosphate hydrolases"/>
    <property type="match status" value="1"/>
</dbReference>
<dbReference type="HAMAP" id="MF_00235">
    <property type="entry name" value="Adenylate_kinase_Adk"/>
    <property type="match status" value="1"/>
</dbReference>
<dbReference type="InterPro" id="IPR006259">
    <property type="entry name" value="Adenyl_kin_sub"/>
</dbReference>
<dbReference type="InterPro" id="IPR000850">
    <property type="entry name" value="Adenylat/UMP-CMP_kin"/>
</dbReference>
<dbReference type="InterPro" id="IPR033690">
    <property type="entry name" value="Adenylat_kinase_CS"/>
</dbReference>
<dbReference type="InterPro" id="IPR007862">
    <property type="entry name" value="Adenylate_kinase_lid-dom"/>
</dbReference>
<dbReference type="InterPro" id="IPR027417">
    <property type="entry name" value="P-loop_NTPase"/>
</dbReference>
<dbReference type="NCBIfam" id="TIGR01351">
    <property type="entry name" value="adk"/>
    <property type="match status" value="1"/>
</dbReference>
<dbReference type="NCBIfam" id="NF001379">
    <property type="entry name" value="PRK00279.1-1"/>
    <property type="match status" value="1"/>
</dbReference>
<dbReference type="NCBIfam" id="NF001380">
    <property type="entry name" value="PRK00279.1-2"/>
    <property type="match status" value="1"/>
</dbReference>
<dbReference type="NCBIfam" id="NF001381">
    <property type="entry name" value="PRK00279.1-3"/>
    <property type="match status" value="1"/>
</dbReference>
<dbReference type="NCBIfam" id="NF011100">
    <property type="entry name" value="PRK14527.1"/>
    <property type="match status" value="1"/>
</dbReference>
<dbReference type="PANTHER" id="PTHR23359">
    <property type="entry name" value="NUCLEOTIDE KINASE"/>
    <property type="match status" value="1"/>
</dbReference>
<dbReference type="Pfam" id="PF00406">
    <property type="entry name" value="ADK"/>
    <property type="match status" value="1"/>
</dbReference>
<dbReference type="Pfam" id="PF05191">
    <property type="entry name" value="ADK_lid"/>
    <property type="match status" value="1"/>
</dbReference>
<dbReference type="PRINTS" id="PR00094">
    <property type="entry name" value="ADENYLTKNASE"/>
</dbReference>
<dbReference type="SUPFAM" id="SSF52540">
    <property type="entry name" value="P-loop containing nucleoside triphosphate hydrolases"/>
    <property type="match status" value="1"/>
</dbReference>
<dbReference type="PROSITE" id="PS00113">
    <property type="entry name" value="ADENYLATE_KINASE"/>
    <property type="match status" value="1"/>
</dbReference>
<sequence>MRVILLGAPGAGKGTQARFITEKFGIPQISTGDMLRAAVKAGSPLGQQVKGVMDSGGLVSDDIIIALIKERITEADCAKGFLFDGFPRTIPQAEALKDAGVTIDHVVEIAVDDEEIVSRIAGRRVHPASGRVYHTEHNPPKVAGKDDVTGEDLIQREDDKEETVRHRLSVYHSQTKPLVDFYQKLSAAEGTPKYHSIAGVGSVEQITAKVLSALS</sequence>
<protein>
    <recommendedName>
        <fullName evidence="1">Adenylate kinase</fullName>
        <shortName evidence="1">AK</shortName>
        <ecNumber evidence="1">2.7.4.3</ecNumber>
    </recommendedName>
    <alternativeName>
        <fullName evidence="1">ATP-AMP transphosphorylase</fullName>
    </alternativeName>
    <alternativeName>
        <fullName evidence="1">ATP:AMP phosphotransferase</fullName>
    </alternativeName>
    <alternativeName>
        <fullName evidence="1">Adenylate monophosphate kinase</fullName>
    </alternativeName>
</protein>
<reference key="1">
    <citation type="submission" date="2007-06" db="EMBL/GenBank/DDBJ databases">
        <authorList>
            <person name="Dodson R.J."/>
            <person name="Harkins D."/>
            <person name="Paulsen I.T."/>
        </authorList>
    </citation>
    <scope>NUCLEOTIDE SEQUENCE [LARGE SCALE GENOMIC DNA]</scope>
    <source>
        <strain>DSM 24068 / PA7</strain>
    </source>
</reference>
<organism>
    <name type="scientific">Pseudomonas paraeruginosa (strain DSM 24068 / PA7)</name>
    <name type="common">Pseudomonas aeruginosa (strain PA7)</name>
    <dbReference type="NCBI Taxonomy" id="381754"/>
    <lineage>
        <taxon>Bacteria</taxon>
        <taxon>Pseudomonadati</taxon>
        <taxon>Pseudomonadota</taxon>
        <taxon>Gammaproteobacteria</taxon>
        <taxon>Pseudomonadales</taxon>
        <taxon>Pseudomonadaceae</taxon>
        <taxon>Pseudomonas</taxon>
        <taxon>Pseudomonas paraeruginosa</taxon>
    </lineage>
</organism>
<name>KAD_PSEP7</name>
<comment type="function">
    <text evidence="1">Catalyzes the reversible transfer of the terminal phosphate group between ATP and AMP. Plays an important role in cellular energy homeostasis and in adenine nucleotide metabolism.</text>
</comment>
<comment type="catalytic activity">
    <reaction evidence="1">
        <text>AMP + ATP = 2 ADP</text>
        <dbReference type="Rhea" id="RHEA:12973"/>
        <dbReference type="ChEBI" id="CHEBI:30616"/>
        <dbReference type="ChEBI" id="CHEBI:456215"/>
        <dbReference type="ChEBI" id="CHEBI:456216"/>
        <dbReference type="EC" id="2.7.4.3"/>
    </reaction>
</comment>
<comment type="pathway">
    <text evidence="1">Purine metabolism; AMP biosynthesis via salvage pathway; AMP from ADP: step 1/1.</text>
</comment>
<comment type="subunit">
    <text evidence="1">Monomer.</text>
</comment>
<comment type="subcellular location">
    <subcellularLocation>
        <location evidence="1">Cytoplasm</location>
    </subcellularLocation>
</comment>
<comment type="domain">
    <text evidence="1">Consists of three domains, a large central CORE domain and two small peripheral domains, NMPbind and LID, which undergo movements during catalysis. The LID domain closes over the site of phosphoryl transfer upon ATP binding. Assembling and dissambling the active center during each catalytic cycle provides an effective means to prevent ATP hydrolysis.</text>
</comment>
<comment type="similarity">
    <text evidence="1">Belongs to the adenylate kinase family.</text>
</comment>
<accession>A6V1A1</accession>
<gene>
    <name evidence="1" type="primary">adk</name>
    <name type="ordered locus">PSPA7_1452</name>
</gene>